<comment type="function">
    <text evidence="1">Large subunit of the glutamine-dependent carbamoyl phosphate synthetase (CPSase). CPSase catalyzes the formation of carbamoyl phosphate from the ammonia moiety of glutamine, carbonate, and phosphate donated by ATP, constituting the first step of 2 biosynthetic pathways, one leading to arginine and/or urea and the other to pyrimidine nucleotides. The large subunit (synthetase) binds the substrates ammonia (free or transferred from glutamine from the small subunit), hydrogencarbonate and ATP and carries out an ATP-coupled ligase reaction, activating hydrogencarbonate by forming carboxy phosphate which reacts with ammonia to form carbamoyl phosphate.</text>
</comment>
<comment type="catalytic activity">
    <reaction evidence="1">
        <text>hydrogencarbonate + L-glutamine + 2 ATP + H2O = carbamoyl phosphate + L-glutamate + 2 ADP + phosphate + 2 H(+)</text>
        <dbReference type="Rhea" id="RHEA:18633"/>
        <dbReference type="ChEBI" id="CHEBI:15377"/>
        <dbReference type="ChEBI" id="CHEBI:15378"/>
        <dbReference type="ChEBI" id="CHEBI:17544"/>
        <dbReference type="ChEBI" id="CHEBI:29985"/>
        <dbReference type="ChEBI" id="CHEBI:30616"/>
        <dbReference type="ChEBI" id="CHEBI:43474"/>
        <dbReference type="ChEBI" id="CHEBI:58228"/>
        <dbReference type="ChEBI" id="CHEBI:58359"/>
        <dbReference type="ChEBI" id="CHEBI:456216"/>
        <dbReference type="EC" id="6.3.5.5"/>
    </reaction>
</comment>
<comment type="catalytic activity">
    <molecule>Carbamoyl phosphate synthase large chain</molecule>
    <reaction evidence="1">
        <text>hydrogencarbonate + NH4(+) + 2 ATP = carbamoyl phosphate + 2 ADP + phosphate + 2 H(+)</text>
        <dbReference type="Rhea" id="RHEA:18029"/>
        <dbReference type="ChEBI" id="CHEBI:15378"/>
        <dbReference type="ChEBI" id="CHEBI:17544"/>
        <dbReference type="ChEBI" id="CHEBI:28938"/>
        <dbReference type="ChEBI" id="CHEBI:30616"/>
        <dbReference type="ChEBI" id="CHEBI:43474"/>
        <dbReference type="ChEBI" id="CHEBI:58228"/>
        <dbReference type="ChEBI" id="CHEBI:456216"/>
        <dbReference type="EC" id="6.3.4.16"/>
    </reaction>
</comment>
<comment type="cofactor">
    <cofactor evidence="1">
        <name>Mg(2+)</name>
        <dbReference type="ChEBI" id="CHEBI:18420"/>
    </cofactor>
    <cofactor evidence="1">
        <name>Mn(2+)</name>
        <dbReference type="ChEBI" id="CHEBI:29035"/>
    </cofactor>
    <text evidence="1">Binds 4 Mg(2+) or Mn(2+) ions per subunit.</text>
</comment>
<comment type="pathway">
    <text evidence="1">Amino-acid biosynthesis; L-arginine biosynthesis; carbamoyl phosphate from bicarbonate: step 1/1.</text>
</comment>
<comment type="pathway">
    <text evidence="1">Pyrimidine metabolism; UMP biosynthesis via de novo pathway; (S)-dihydroorotate from bicarbonate: step 1/3.</text>
</comment>
<comment type="subunit">
    <text evidence="1">Composed of two chains; the small (or glutamine) chain promotes the hydrolysis of glutamine to ammonia, which is used by the large (or ammonia) chain to synthesize carbamoyl phosphate. Tetramer of heterodimers (alpha,beta)4.</text>
</comment>
<comment type="domain">
    <text evidence="1">The large subunit is composed of 2 ATP-grasp domains that are involved in binding the 2 ATP molecules needed for carbamoyl phosphate synthesis. The N-terminal ATP-grasp domain (referred to as the carboxyphosphate synthetic component) catalyzes the ATP-dependent phosphorylation of hydrogencarbonate to carboxyphosphate and the subsequent nucleophilic attack by ammonia to form a carbamate intermediate. The C-terminal ATP-grasp domain (referred to as the carbamoyl phosphate synthetic component) then catalyzes the phosphorylation of carbamate with the second ATP to form the end product carbamoyl phosphate. The reactive and unstable enzyme intermediates are sequentially channeled from one active site to the next through the interior of the protein over a distance of at least 96 A.</text>
</comment>
<comment type="similarity">
    <text evidence="1">Belongs to the CarB family.</text>
</comment>
<keyword id="KW-0028">Amino-acid biosynthesis</keyword>
<keyword id="KW-0055">Arginine biosynthesis</keyword>
<keyword id="KW-0067">ATP-binding</keyword>
<keyword id="KW-0436">Ligase</keyword>
<keyword id="KW-0460">Magnesium</keyword>
<keyword id="KW-0464">Manganese</keyword>
<keyword id="KW-0479">Metal-binding</keyword>
<keyword id="KW-0547">Nucleotide-binding</keyword>
<keyword id="KW-0665">Pyrimidine biosynthesis</keyword>
<keyword id="KW-0677">Repeat</keyword>
<reference key="1">
    <citation type="journal article" date="2004" name="J. Bacteriol.">
        <title>Comparative genomics of two Leptospira interrogans serovars reveals novel insights into physiology and pathogenesis.</title>
        <authorList>
            <person name="Nascimento A.L.T.O."/>
            <person name="Ko A.I."/>
            <person name="Martins E.A.L."/>
            <person name="Monteiro-Vitorello C.B."/>
            <person name="Ho P.L."/>
            <person name="Haake D.A."/>
            <person name="Verjovski-Almeida S."/>
            <person name="Hartskeerl R.A."/>
            <person name="Marques M.V."/>
            <person name="Oliveira M.C."/>
            <person name="Menck C.F.M."/>
            <person name="Leite L.C.C."/>
            <person name="Carrer H."/>
            <person name="Coutinho L.L."/>
            <person name="Degrave W.M."/>
            <person name="Dellagostin O.A."/>
            <person name="El-Dorry H."/>
            <person name="Ferro E.S."/>
            <person name="Ferro M.I.T."/>
            <person name="Furlan L.R."/>
            <person name="Gamberini M."/>
            <person name="Giglioti E.A."/>
            <person name="Goes-Neto A."/>
            <person name="Goldman G.H."/>
            <person name="Goldman M.H.S."/>
            <person name="Harakava R."/>
            <person name="Jeronimo S.M.B."/>
            <person name="Junqueira-de-Azevedo I.L.M."/>
            <person name="Kimura E.T."/>
            <person name="Kuramae E.E."/>
            <person name="Lemos E.G.M."/>
            <person name="Lemos M.V.F."/>
            <person name="Marino C.L."/>
            <person name="Nunes L.R."/>
            <person name="de Oliveira R.C."/>
            <person name="Pereira G.G."/>
            <person name="Reis M.S."/>
            <person name="Schriefer A."/>
            <person name="Siqueira W.J."/>
            <person name="Sommer P."/>
            <person name="Tsai S.M."/>
            <person name="Simpson A.J.G."/>
            <person name="Ferro J.A."/>
            <person name="Camargo L.E.A."/>
            <person name="Kitajima J.P."/>
            <person name="Setubal J.C."/>
            <person name="Van Sluys M.A."/>
        </authorList>
    </citation>
    <scope>NUCLEOTIDE SEQUENCE [LARGE SCALE GENOMIC DNA]</scope>
    <source>
        <strain>Fiocruz L1-130</strain>
    </source>
</reference>
<proteinExistence type="inferred from homology"/>
<organism>
    <name type="scientific">Leptospira interrogans serogroup Icterohaemorrhagiae serovar copenhageni (strain Fiocruz L1-130)</name>
    <dbReference type="NCBI Taxonomy" id="267671"/>
    <lineage>
        <taxon>Bacteria</taxon>
        <taxon>Pseudomonadati</taxon>
        <taxon>Spirochaetota</taxon>
        <taxon>Spirochaetia</taxon>
        <taxon>Leptospirales</taxon>
        <taxon>Leptospiraceae</taxon>
        <taxon>Leptospira</taxon>
    </lineage>
</organism>
<evidence type="ECO:0000255" key="1">
    <source>
        <dbReference type="HAMAP-Rule" id="MF_01210"/>
    </source>
</evidence>
<feature type="chain" id="PRO_0000145016" description="Carbamoyl phosphate synthase large chain">
    <location>
        <begin position="1"/>
        <end position="1106"/>
    </location>
</feature>
<feature type="domain" description="ATP-grasp 1" evidence="1">
    <location>
        <begin position="133"/>
        <end position="328"/>
    </location>
</feature>
<feature type="domain" description="ATP-grasp 2" evidence="1">
    <location>
        <begin position="707"/>
        <end position="898"/>
    </location>
</feature>
<feature type="domain" description="MGS-like" evidence="1">
    <location>
        <begin position="965"/>
        <end position="1106"/>
    </location>
</feature>
<feature type="region of interest" description="Carboxyphosphate synthetic domain" evidence="1">
    <location>
        <begin position="1"/>
        <end position="402"/>
    </location>
</feature>
<feature type="region of interest" description="Oligomerization domain" evidence="1">
    <location>
        <begin position="403"/>
        <end position="582"/>
    </location>
</feature>
<feature type="region of interest" description="Carbamoyl phosphate synthetic domain" evidence="1">
    <location>
        <begin position="583"/>
        <end position="964"/>
    </location>
</feature>
<feature type="region of interest" description="Allosteric domain" evidence="1">
    <location>
        <begin position="965"/>
        <end position="1106"/>
    </location>
</feature>
<feature type="binding site" evidence="1">
    <location>
        <position position="129"/>
    </location>
    <ligand>
        <name>ATP</name>
        <dbReference type="ChEBI" id="CHEBI:30616"/>
        <label>1</label>
    </ligand>
</feature>
<feature type="binding site" evidence="1">
    <location>
        <position position="169"/>
    </location>
    <ligand>
        <name>ATP</name>
        <dbReference type="ChEBI" id="CHEBI:30616"/>
        <label>1</label>
    </ligand>
</feature>
<feature type="binding site" evidence="1">
    <location>
        <position position="175"/>
    </location>
    <ligand>
        <name>ATP</name>
        <dbReference type="ChEBI" id="CHEBI:30616"/>
        <label>1</label>
    </ligand>
</feature>
<feature type="binding site" evidence="1">
    <location>
        <position position="176"/>
    </location>
    <ligand>
        <name>ATP</name>
        <dbReference type="ChEBI" id="CHEBI:30616"/>
        <label>1</label>
    </ligand>
</feature>
<feature type="binding site" evidence="1">
    <location>
        <position position="208"/>
    </location>
    <ligand>
        <name>ATP</name>
        <dbReference type="ChEBI" id="CHEBI:30616"/>
        <label>1</label>
    </ligand>
</feature>
<feature type="binding site" evidence="1">
    <location>
        <position position="210"/>
    </location>
    <ligand>
        <name>ATP</name>
        <dbReference type="ChEBI" id="CHEBI:30616"/>
        <label>1</label>
    </ligand>
</feature>
<feature type="binding site" evidence="1">
    <location>
        <position position="215"/>
    </location>
    <ligand>
        <name>ATP</name>
        <dbReference type="ChEBI" id="CHEBI:30616"/>
        <label>1</label>
    </ligand>
</feature>
<feature type="binding site" evidence="1">
    <location>
        <position position="241"/>
    </location>
    <ligand>
        <name>ATP</name>
        <dbReference type="ChEBI" id="CHEBI:30616"/>
        <label>1</label>
    </ligand>
</feature>
<feature type="binding site" evidence="1">
    <location>
        <position position="242"/>
    </location>
    <ligand>
        <name>ATP</name>
        <dbReference type="ChEBI" id="CHEBI:30616"/>
        <label>1</label>
    </ligand>
</feature>
<feature type="binding site" evidence="1">
    <location>
        <position position="243"/>
    </location>
    <ligand>
        <name>ATP</name>
        <dbReference type="ChEBI" id="CHEBI:30616"/>
        <label>1</label>
    </ligand>
</feature>
<feature type="binding site" evidence="1">
    <location>
        <position position="285"/>
    </location>
    <ligand>
        <name>ATP</name>
        <dbReference type="ChEBI" id="CHEBI:30616"/>
        <label>1</label>
    </ligand>
</feature>
<feature type="binding site" evidence="1">
    <location>
        <position position="285"/>
    </location>
    <ligand>
        <name>Mg(2+)</name>
        <dbReference type="ChEBI" id="CHEBI:18420"/>
        <label>1</label>
    </ligand>
</feature>
<feature type="binding site" evidence="1">
    <location>
        <position position="285"/>
    </location>
    <ligand>
        <name>Mn(2+)</name>
        <dbReference type="ChEBI" id="CHEBI:29035"/>
        <label>1</label>
    </ligand>
</feature>
<feature type="binding site" evidence="1">
    <location>
        <position position="299"/>
    </location>
    <ligand>
        <name>ATP</name>
        <dbReference type="ChEBI" id="CHEBI:30616"/>
        <label>1</label>
    </ligand>
</feature>
<feature type="binding site" evidence="1">
    <location>
        <position position="299"/>
    </location>
    <ligand>
        <name>Mg(2+)</name>
        <dbReference type="ChEBI" id="CHEBI:18420"/>
        <label>1</label>
    </ligand>
</feature>
<feature type="binding site" evidence="1">
    <location>
        <position position="299"/>
    </location>
    <ligand>
        <name>Mg(2+)</name>
        <dbReference type="ChEBI" id="CHEBI:18420"/>
        <label>2</label>
    </ligand>
</feature>
<feature type="binding site" evidence="1">
    <location>
        <position position="299"/>
    </location>
    <ligand>
        <name>Mn(2+)</name>
        <dbReference type="ChEBI" id="CHEBI:29035"/>
        <label>1</label>
    </ligand>
</feature>
<feature type="binding site" evidence="1">
    <location>
        <position position="299"/>
    </location>
    <ligand>
        <name>Mn(2+)</name>
        <dbReference type="ChEBI" id="CHEBI:29035"/>
        <label>2</label>
    </ligand>
</feature>
<feature type="binding site" evidence="1">
    <location>
        <position position="301"/>
    </location>
    <ligand>
        <name>Mg(2+)</name>
        <dbReference type="ChEBI" id="CHEBI:18420"/>
        <label>2</label>
    </ligand>
</feature>
<feature type="binding site" evidence="1">
    <location>
        <position position="301"/>
    </location>
    <ligand>
        <name>Mn(2+)</name>
        <dbReference type="ChEBI" id="CHEBI:29035"/>
        <label>2</label>
    </ligand>
</feature>
<feature type="binding site" evidence="1">
    <location>
        <position position="743"/>
    </location>
    <ligand>
        <name>ATP</name>
        <dbReference type="ChEBI" id="CHEBI:30616"/>
        <label>2</label>
    </ligand>
</feature>
<feature type="binding site" evidence="1">
    <location>
        <position position="782"/>
    </location>
    <ligand>
        <name>ATP</name>
        <dbReference type="ChEBI" id="CHEBI:30616"/>
        <label>2</label>
    </ligand>
</feature>
<feature type="binding site" evidence="1">
    <location>
        <position position="784"/>
    </location>
    <ligand>
        <name>ATP</name>
        <dbReference type="ChEBI" id="CHEBI:30616"/>
        <label>2</label>
    </ligand>
</feature>
<feature type="binding site" evidence="1">
    <location>
        <position position="789"/>
    </location>
    <ligand>
        <name>ATP</name>
        <dbReference type="ChEBI" id="CHEBI:30616"/>
        <label>2</label>
    </ligand>
</feature>
<feature type="binding site" evidence="1">
    <location>
        <position position="814"/>
    </location>
    <ligand>
        <name>ATP</name>
        <dbReference type="ChEBI" id="CHEBI:30616"/>
        <label>2</label>
    </ligand>
</feature>
<feature type="binding site" evidence="1">
    <location>
        <position position="815"/>
    </location>
    <ligand>
        <name>ATP</name>
        <dbReference type="ChEBI" id="CHEBI:30616"/>
        <label>2</label>
    </ligand>
</feature>
<feature type="binding site" evidence="1">
    <location>
        <position position="816"/>
    </location>
    <ligand>
        <name>ATP</name>
        <dbReference type="ChEBI" id="CHEBI:30616"/>
        <label>2</label>
    </ligand>
</feature>
<feature type="binding site" evidence="1">
    <location>
        <position position="817"/>
    </location>
    <ligand>
        <name>ATP</name>
        <dbReference type="ChEBI" id="CHEBI:30616"/>
        <label>2</label>
    </ligand>
</feature>
<feature type="binding site" evidence="1">
    <location>
        <position position="857"/>
    </location>
    <ligand>
        <name>ATP</name>
        <dbReference type="ChEBI" id="CHEBI:30616"/>
        <label>2</label>
    </ligand>
</feature>
<feature type="binding site" evidence="1">
    <location>
        <position position="857"/>
    </location>
    <ligand>
        <name>Mg(2+)</name>
        <dbReference type="ChEBI" id="CHEBI:18420"/>
        <label>3</label>
    </ligand>
</feature>
<feature type="binding site" evidence="1">
    <location>
        <position position="857"/>
    </location>
    <ligand>
        <name>Mn(2+)</name>
        <dbReference type="ChEBI" id="CHEBI:29035"/>
        <label>3</label>
    </ligand>
</feature>
<feature type="binding site" evidence="1">
    <location>
        <position position="869"/>
    </location>
    <ligand>
        <name>ATP</name>
        <dbReference type="ChEBI" id="CHEBI:30616"/>
        <label>2</label>
    </ligand>
</feature>
<feature type="binding site" evidence="1">
    <location>
        <position position="869"/>
    </location>
    <ligand>
        <name>Mg(2+)</name>
        <dbReference type="ChEBI" id="CHEBI:18420"/>
        <label>3</label>
    </ligand>
</feature>
<feature type="binding site" evidence="1">
    <location>
        <position position="869"/>
    </location>
    <ligand>
        <name>Mg(2+)</name>
        <dbReference type="ChEBI" id="CHEBI:18420"/>
        <label>4</label>
    </ligand>
</feature>
<feature type="binding site" evidence="1">
    <location>
        <position position="869"/>
    </location>
    <ligand>
        <name>Mn(2+)</name>
        <dbReference type="ChEBI" id="CHEBI:29035"/>
        <label>3</label>
    </ligand>
</feature>
<feature type="binding site" evidence="1">
    <location>
        <position position="869"/>
    </location>
    <ligand>
        <name>Mn(2+)</name>
        <dbReference type="ChEBI" id="CHEBI:29035"/>
        <label>4</label>
    </ligand>
</feature>
<feature type="binding site" evidence="1">
    <location>
        <position position="871"/>
    </location>
    <ligand>
        <name>Mg(2+)</name>
        <dbReference type="ChEBI" id="CHEBI:18420"/>
        <label>4</label>
    </ligand>
</feature>
<feature type="binding site" evidence="1">
    <location>
        <position position="871"/>
    </location>
    <ligand>
        <name>Mn(2+)</name>
        <dbReference type="ChEBI" id="CHEBI:29035"/>
        <label>4</label>
    </ligand>
</feature>
<sequence>MPRREDIRSVLILGSGPIVIGQACEFDYSGTQAAKALKEKGIRVILLNSNPATIMTDPDLADATYVEPMTVPVVQKILEKEKPDAILPTVGGQTALNLALACNSAGILEKYNVELIGAKVDAIKKAEDRELFKKAMEKIGVRVPASGLANNLKDAVEIKNKLGLPLIVRPAFTLGGTGGGIAYTEETFEEVVSKGLKASPISQVLLEESVLGWKEFELEVMRDLADNVVIICSIENIDPMGVHTGDSITVAPQQTLSDKEYQNLRDMSIAIIREIGVETGGSNIQFAVNPTNGDVIVIEMNPRVSRSSALASKATGFPIAKIAALLSIGYTLDEIKNDITRVTPASFEPSIDYVVTKVPRFAFEKFPGTDDTLGVQMKAVGEAMAIGRTFKESFQKALRSLEIDRYGFGSDGYFQELLYSRSLNNDQRKEWIDSHLKRPNDKRIFYVKLAFDEGYTVDQIHDLCKIDRWFLWQMEGLLKLEKEYSEKGNSILYKMKQVGFSNRQLSFLKNKKQILDLLDGNLRVDLKKTEIQNLLKLSEEEIEVELGSKKILPVYKRIDTCAGEFEAYTPYFYSSYDEEDESDVTNAKSVMILGGGPNRIGQGIEFDYCCCQASYALQDLGIESIMINSNPETVSTDYDTSDRLYFEPLTLEDVYRIYQNEKPEGVIIQFGGQTPLKLAKDLEKKGVKILGTSPDSIDRAEDRKRFVEVLEKLKLNSPESGIATSMEEAREIAHKIGYPVLVRPSYVLGGRAMLIINEEKELDRYMEKAEEISKDRPLLIDSFLEDAIEVDVDALCDGKEVFVTGIMEHIEEAGIHSGDSACVLPPQTLSKNMMDEIRKATVNLALELQVKGLINIQYAVKNEILYIIEVNPRASRTVPFVSKALGHPIVKYATRIMMGESLKSLPLPKEMEFSQVSVKEVVLPFNKFPGVDTILGPEMRSTGEVMGIASTAGEAFLKSQYMAGDELPSQGTVFVSINDKTKAELLSYIKDLSELGFNLIATSGTHKFLSDNGILSSKINKVYDGIFPTALDYIRENKIHLIINTPLSRVTRDDSFTIRQAAIRFKVPCLTTSNAAKALIKGMVEMKNKGFTIHSLQEIHAMPKIL</sequence>
<dbReference type="EC" id="6.3.4.16" evidence="1"/>
<dbReference type="EC" id="6.3.5.5" evidence="1"/>
<dbReference type="EMBL" id="AE016823">
    <property type="protein sequence ID" value="AAS71436.1"/>
    <property type="molecule type" value="Genomic_DNA"/>
</dbReference>
<dbReference type="RefSeq" id="WP_001137995.1">
    <property type="nucleotide sequence ID" value="NC_005823.1"/>
</dbReference>
<dbReference type="SMR" id="Q72NF1"/>
<dbReference type="GeneID" id="61142757"/>
<dbReference type="KEGG" id="lic:LIC_12883"/>
<dbReference type="HOGENOM" id="CLU_000513_1_0_12"/>
<dbReference type="UniPathway" id="UPA00068">
    <property type="reaction ID" value="UER00171"/>
</dbReference>
<dbReference type="UniPathway" id="UPA00070">
    <property type="reaction ID" value="UER00115"/>
</dbReference>
<dbReference type="Proteomes" id="UP000007037">
    <property type="component" value="Chromosome I"/>
</dbReference>
<dbReference type="GO" id="GO:0005737">
    <property type="term" value="C:cytoplasm"/>
    <property type="evidence" value="ECO:0007669"/>
    <property type="project" value="TreeGrafter"/>
</dbReference>
<dbReference type="GO" id="GO:0005524">
    <property type="term" value="F:ATP binding"/>
    <property type="evidence" value="ECO:0007669"/>
    <property type="project" value="UniProtKB-UniRule"/>
</dbReference>
<dbReference type="GO" id="GO:0004087">
    <property type="term" value="F:carbamoyl-phosphate synthase (ammonia) activity"/>
    <property type="evidence" value="ECO:0007669"/>
    <property type="project" value="RHEA"/>
</dbReference>
<dbReference type="GO" id="GO:0004088">
    <property type="term" value="F:carbamoyl-phosphate synthase (glutamine-hydrolyzing) activity"/>
    <property type="evidence" value="ECO:0007669"/>
    <property type="project" value="UniProtKB-UniRule"/>
</dbReference>
<dbReference type="GO" id="GO:0046872">
    <property type="term" value="F:metal ion binding"/>
    <property type="evidence" value="ECO:0007669"/>
    <property type="project" value="UniProtKB-KW"/>
</dbReference>
<dbReference type="GO" id="GO:0044205">
    <property type="term" value="P:'de novo' UMP biosynthetic process"/>
    <property type="evidence" value="ECO:0007669"/>
    <property type="project" value="UniProtKB-UniRule"/>
</dbReference>
<dbReference type="GO" id="GO:0006541">
    <property type="term" value="P:glutamine metabolic process"/>
    <property type="evidence" value="ECO:0007669"/>
    <property type="project" value="TreeGrafter"/>
</dbReference>
<dbReference type="GO" id="GO:0006526">
    <property type="term" value="P:L-arginine biosynthetic process"/>
    <property type="evidence" value="ECO:0007669"/>
    <property type="project" value="UniProtKB-UniRule"/>
</dbReference>
<dbReference type="CDD" id="cd01424">
    <property type="entry name" value="MGS_CPS_II"/>
    <property type="match status" value="1"/>
</dbReference>
<dbReference type="FunFam" id="1.10.1030.10:FF:000002">
    <property type="entry name" value="Carbamoyl-phosphate synthase large chain"/>
    <property type="match status" value="1"/>
</dbReference>
<dbReference type="FunFam" id="3.30.1490.20:FF:000001">
    <property type="entry name" value="Carbamoyl-phosphate synthase large chain"/>
    <property type="match status" value="1"/>
</dbReference>
<dbReference type="FunFam" id="3.30.470.20:FF:000007">
    <property type="entry name" value="Carbamoyl-phosphate synthase large chain"/>
    <property type="match status" value="1"/>
</dbReference>
<dbReference type="FunFam" id="3.30.470.20:FF:000013">
    <property type="entry name" value="Carbamoyl-phosphate synthase large chain"/>
    <property type="match status" value="1"/>
</dbReference>
<dbReference type="FunFam" id="3.40.50.20:FF:000001">
    <property type="entry name" value="Carbamoyl-phosphate synthase large chain"/>
    <property type="match status" value="1"/>
</dbReference>
<dbReference type="FunFam" id="3.40.50.20:FF:000003">
    <property type="entry name" value="Carbamoyl-phosphate synthase large chain"/>
    <property type="match status" value="1"/>
</dbReference>
<dbReference type="Gene3D" id="3.40.50.20">
    <property type="match status" value="2"/>
</dbReference>
<dbReference type="Gene3D" id="3.30.470.20">
    <property type="entry name" value="ATP-grasp fold, B domain"/>
    <property type="match status" value="2"/>
</dbReference>
<dbReference type="Gene3D" id="1.10.1030.10">
    <property type="entry name" value="Carbamoyl-phosphate synthetase, large subunit oligomerisation domain"/>
    <property type="match status" value="1"/>
</dbReference>
<dbReference type="Gene3D" id="3.40.50.1380">
    <property type="entry name" value="Methylglyoxal synthase-like domain"/>
    <property type="match status" value="1"/>
</dbReference>
<dbReference type="HAMAP" id="MF_01210_A">
    <property type="entry name" value="CPSase_L_chain_A"/>
    <property type="match status" value="1"/>
</dbReference>
<dbReference type="HAMAP" id="MF_01210_B">
    <property type="entry name" value="CPSase_L_chain_B"/>
    <property type="match status" value="1"/>
</dbReference>
<dbReference type="InterPro" id="IPR011761">
    <property type="entry name" value="ATP-grasp"/>
</dbReference>
<dbReference type="InterPro" id="IPR006275">
    <property type="entry name" value="CarbamoylP_synth_lsu"/>
</dbReference>
<dbReference type="InterPro" id="IPR005480">
    <property type="entry name" value="CarbamoylP_synth_lsu_oligo"/>
</dbReference>
<dbReference type="InterPro" id="IPR036897">
    <property type="entry name" value="CarbamoylP_synth_lsu_oligo_sf"/>
</dbReference>
<dbReference type="InterPro" id="IPR005479">
    <property type="entry name" value="CbamoylP_synth_lsu-like_ATP-bd"/>
</dbReference>
<dbReference type="InterPro" id="IPR005483">
    <property type="entry name" value="CbamoylP_synth_lsu_CPSase_dom"/>
</dbReference>
<dbReference type="InterPro" id="IPR011607">
    <property type="entry name" value="MGS-like_dom"/>
</dbReference>
<dbReference type="InterPro" id="IPR036914">
    <property type="entry name" value="MGS-like_dom_sf"/>
</dbReference>
<dbReference type="InterPro" id="IPR033937">
    <property type="entry name" value="MGS_CPS_CarB"/>
</dbReference>
<dbReference type="InterPro" id="IPR016185">
    <property type="entry name" value="PreATP-grasp_dom_sf"/>
</dbReference>
<dbReference type="NCBIfam" id="TIGR01369">
    <property type="entry name" value="CPSaseII_lrg"/>
    <property type="match status" value="1"/>
</dbReference>
<dbReference type="NCBIfam" id="NF003671">
    <property type="entry name" value="PRK05294.1"/>
    <property type="match status" value="1"/>
</dbReference>
<dbReference type="PANTHER" id="PTHR11405:SF53">
    <property type="entry name" value="CARBAMOYL-PHOSPHATE SYNTHASE [AMMONIA], MITOCHONDRIAL"/>
    <property type="match status" value="1"/>
</dbReference>
<dbReference type="PANTHER" id="PTHR11405">
    <property type="entry name" value="CARBAMOYLTRANSFERASE FAMILY MEMBER"/>
    <property type="match status" value="1"/>
</dbReference>
<dbReference type="Pfam" id="PF02786">
    <property type="entry name" value="CPSase_L_D2"/>
    <property type="match status" value="2"/>
</dbReference>
<dbReference type="Pfam" id="PF02787">
    <property type="entry name" value="CPSase_L_D3"/>
    <property type="match status" value="1"/>
</dbReference>
<dbReference type="Pfam" id="PF02142">
    <property type="entry name" value="MGS"/>
    <property type="match status" value="1"/>
</dbReference>
<dbReference type="PRINTS" id="PR00098">
    <property type="entry name" value="CPSASE"/>
</dbReference>
<dbReference type="SMART" id="SM01096">
    <property type="entry name" value="CPSase_L_D3"/>
    <property type="match status" value="1"/>
</dbReference>
<dbReference type="SMART" id="SM00851">
    <property type="entry name" value="MGS"/>
    <property type="match status" value="1"/>
</dbReference>
<dbReference type="SUPFAM" id="SSF48108">
    <property type="entry name" value="Carbamoyl phosphate synthetase, large subunit connection domain"/>
    <property type="match status" value="1"/>
</dbReference>
<dbReference type="SUPFAM" id="SSF56059">
    <property type="entry name" value="Glutathione synthetase ATP-binding domain-like"/>
    <property type="match status" value="2"/>
</dbReference>
<dbReference type="SUPFAM" id="SSF52335">
    <property type="entry name" value="Methylglyoxal synthase-like"/>
    <property type="match status" value="1"/>
</dbReference>
<dbReference type="SUPFAM" id="SSF52440">
    <property type="entry name" value="PreATP-grasp domain"/>
    <property type="match status" value="2"/>
</dbReference>
<dbReference type="PROSITE" id="PS50975">
    <property type="entry name" value="ATP_GRASP"/>
    <property type="match status" value="2"/>
</dbReference>
<dbReference type="PROSITE" id="PS00866">
    <property type="entry name" value="CPSASE_1"/>
    <property type="match status" value="1"/>
</dbReference>
<dbReference type="PROSITE" id="PS00867">
    <property type="entry name" value="CPSASE_2"/>
    <property type="match status" value="2"/>
</dbReference>
<dbReference type="PROSITE" id="PS51855">
    <property type="entry name" value="MGS"/>
    <property type="match status" value="1"/>
</dbReference>
<name>CARB_LEPIC</name>
<protein>
    <recommendedName>
        <fullName evidence="1">Carbamoyl phosphate synthase large chain</fullName>
        <ecNumber evidence="1">6.3.4.16</ecNumber>
        <ecNumber evidence="1">6.3.5.5</ecNumber>
    </recommendedName>
    <alternativeName>
        <fullName evidence="1">Carbamoyl phosphate synthetase ammonia chain</fullName>
    </alternativeName>
</protein>
<gene>
    <name evidence="1" type="primary">carB</name>
    <name type="ordered locus">LIC_12883</name>
</gene>
<accession>Q72NF1</accession>